<dbReference type="EMBL" id="U40316">
    <property type="protein sequence ID" value="AAB63529.1"/>
    <property type="molecule type" value="Genomic_DNA"/>
</dbReference>
<dbReference type="EMBL" id="DQ115391">
    <property type="protein sequence ID" value="AAZ22468.1"/>
    <property type="molecule type" value="Genomic_DNA"/>
</dbReference>
<dbReference type="EMBL" id="Z72840">
    <property type="protein sequence ID" value="CAA97055.1"/>
    <property type="molecule type" value="Genomic_DNA"/>
</dbReference>
<dbReference type="EMBL" id="BK006941">
    <property type="protein sequence ID" value="DAA08151.1"/>
    <property type="molecule type" value="Genomic_DNA"/>
</dbReference>
<dbReference type="PIR" id="S61943">
    <property type="entry name" value="S61943"/>
</dbReference>
<dbReference type="RefSeq" id="NP_011569.1">
    <property type="nucleotide sequence ID" value="NM_001181184.1"/>
</dbReference>
<dbReference type="SMR" id="P50276"/>
<dbReference type="BioGRID" id="33300">
    <property type="interactions" value="269"/>
</dbReference>
<dbReference type="DIP" id="DIP-7914N"/>
<dbReference type="FunCoup" id="P50276">
    <property type="interactions" value="450"/>
</dbReference>
<dbReference type="IntAct" id="P50276">
    <property type="interactions" value="58"/>
</dbReference>
<dbReference type="MINT" id="P50276"/>
<dbReference type="STRING" id="4932.YGR055W"/>
<dbReference type="TCDB" id="2.A.3.8.4">
    <property type="family name" value="the amino acid-polyamine-organocation (apc) family"/>
</dbReference>
<dbReference type="iPTMnet" id="P50276"/>
<dbReference type="PaxDb" id="4932-YGR055W"/>
<dbReference type="PeptideAtlas" id="P50276"/>
<dbReference type="EnsemblFungi" id="YGR055W_mRNA">
    <property type="protein sequence ID" value="YGR055W"/>
    <property type="gene ID" value="YGR055W"/>
</dbReference>
<dbReference type="GeneID" id="852946"/>
<dbReference type="KEGG" id="sce:YGR055W"/>
<dbReference type="AGR" id="SGD:S000003287"/>
<dbReference type="SGD" id="S000003287">
    <property type="gene designation" value="MUP1"/>
</dbReference>
<dbReference type="VEuPathDB" id="FungiDB:YGR055W"/>
<dbReference type="eggNOG" id="KOG1287">
    <property type="taxonomic scope" value="Eukaryota"/>
</dbReference>
<dbReference type="HOGENOM" id="CLU_013661_4_1_1"/>
<dbReference type="InParanoid" id="P50276"/>
<dbReference type="OMA" id="LYMFVNI"/>
<dbReference type="OrthoDB" id="5982228at2759"/>
<dbReference type="BioCyc" id="YEAST:G3O-30772-MONOMER"/>
<dbReference type="Reactome" id="R-SCE-352230">
    <property type="pathway name" value="Amino acid transport across the plasma membrane"/>
</dbReference>
<dbReference type="BioGRID-ORCS" id="852946">
    <property type="hits" value="0 hits in 10 CRISPR screens"/>
</dbReference>
<dbReference type="PRO" id="PR:P50276"/>
<dbReference type="Proteomes" id="UP000002311">
    <property type="component" value="Chromosome VII"/>
</dbReference>
<dbReference type="RNAct" id="P50276">
    <property type="molecule type" value="protein"/>
</dbReference>
<dbReference type="GO" id="GO:0071944">
    <property type="term" value="C:cell periphery"/>
    <property type="evidence" value="ECO:0007005"/>
    <property type="project" value="SGD"/>
</dbReference>
<dbReference type="GO" id="GO:0000324">
    <property type="term" value="C:fungal-type vacuole"/>
    <property type="evidence" value="ECO:0007005"/>
    <property type="project" value="SGD"/>
</dbReference>
<dbReference type="GO" id="GO:0005886">
    <property type="term" value="C:plasma membrane"/>
    <property type="evidence" value="ECO:0000314"/>
    <property type="project" value="SGD"/>
</dbReference>
<dbReference type="GO" id="GO:0015179">
    <property type="term" value="F:L-amino acid transmembrane transporter activity"/>
    <property type="evidence" value="ECO:0000318"/>
    <property type="project" value="GO_Central"/>
</dbReference>
<dbReference type="GO" id="GO:0000102">
    <property type="term" value="F:L-methionine secondary active transmembrane transporter activity"/>
    <property type="evidence" value="ECO:0000314"/>
    <property type="project" value="SGD"/>
</dbReference>
<dbReference type="GO" id="GO:0003333">
    <property type="term" value="P:amino acid transmembrane transport"/>
    <property type="evidence" value="ECO:0000318"/>
    <property type="project" value="GO_Central"/>
</dbReference>
<dbReference type="GO" id="GO:0042883">
    <property type="term" value="P:cysteine transport"/>
    <property type="evidence" value="ECO:0000314"/>
    <property type="project" value="UniProtKB"/>
</dbReference>
<dbReference type="GO" id="GO:1903692">
    <property type="term" value="P:methionine import across plasma membrane"/>
    <property type="evidence" value="ECO:0000315"/>
    <property type="project" value="SGD"/>
</dbReference>
<dbReference type="GO" id="GO:0015821">
    <property type="term" value="P:methionine transport"/>
    <property type="evidence" value="ECO:0000314"/>
    <property type="project" value="UniProtKB"/>
</dbReference>
<dbReference type="GO" id="GO:0000101">
    <property type="term" value="P:sulfur amino acid transport"/>
    <property type="evidence" value="ECO:0000315"/>
    <property type="project" value="SGD"/>
</dbReference>
<dbReference type="FunFam" id="1.20.1740.10:FF:000025">
    <property type="entry name" value="High-affinity methionine permease"/>
    <property type="match status" value="1"/>
</dbReference>
<dbReference type="Gene3D" id="1.20.1740.10">
    <property type="entry name" value="Amino acid/polyamine transporter I"/>
    <property type="match status" value="1"/>
</dbReference>
<dbReference type="InterPro" id="IPR002293">
    <property type="entry name" value="AA/rel_permease1"/>
</dbReference>
<dbReference type="InterPro" id="IPR050598">
    <property type="entry name" value="AminoAcid_Transporter"/>
</dbReference>
<dbReference type="PANTHER" id="PTHR11785">
    <property type="entry name" value="AMINO ACID TRANSPORTER"/>
    <property type="match status" value="1"/>
</dbReference>
<dbReference type="PANTHER" id="PTHR11785:SF498">
    <property type="entry name" value="HIGH-AFFINITY METHIONINE PERMEASE"/>
    <property type="match status" value="1"/>
</dbReference>
<dbReference type="Pfam" id="PF13520">
    <property type="entry name" value="AA_permease_2"/>
    <property type="match status" value="1"/>
</dbReference>
<dbReference type="PIRSF" id="PIRSF006060">
    <property type="entry name" value="AA_transporter"/>
    <property type="match status" value="1"/>
</dbReference>
<feature type="chain" id="PRO_0000096648" description="High-affinity methionine permease">
    <location>
        <begin position="1"/>
        <end position="574"/>
    </location>
</feature>
<feature type="topological domain" description="Cytoplasmic" evidence="1">
    <location>
        <begin position="1"/>
        <end position="61"/>
    </location>
</feature>
<feature type="transmembrane region" description="Helical" evidence="1">
    <location>
        <begin position="62"/>
        <end position="82"/>
    </location>
</feature>
<feature type="topological domain" description="Extracellular" evidence="1">
    <location>
        <begin position="83"/>
        <end position="92"/>
    </location>
</feature>
<feature type="transmembrane region" description="Helical" evidence="1">
    <location>
        <begin position="93"/>
        <end position="113"/>
    </location>
</feature>
<feature type="topological domain" description="Cytoplasmic" evidence="1">
    <location>
        <begin position="114"/>
        <end position="140"/>
    </location>
</feature>
<feature type="transmembrane region" description="Helical" evidence="1">
    <location>
        <begin position="141"/>
        <end position="161"/>
    </location>
</feature>
<feature type="topological domain" description="Extracellular" evidence="1">
    <location>
        <begin position="162"/>
        <end position="182"/>
    </location>
</feature>
<feature type="transmembrane region" description="Helical" evidence="1">
    <location>
        <begin position="183"/>
        <end position="203"/>
    </location>
</feature>
<feature type="topological domain" description="Cytoplasmic" evidence="1">
    <location>
        <begin position="204"/>
        <end position="207"/>
    </location>
</feature>
<feature type="transmembrane region" description="Helical" evidence="1">
    <location>
        <begin position="208"/>
        <end position="228"/>
    </location>
</feature>
<feature type="topological domain" description="Extracellular" evidence="1">
    <location>
        <begin position="229"/>
        <end position="293"/>
    </location>
</feature>
<feature type="transmembrane region" description="Helical" evidence="1">
    <location>
        <begin position="294"/>
        <end position="314"/>
    </location>
</feature>
<feature type="topological domain" description="Cytoplasmic" evidence="1">
    <location>
        <begin position="315"/>
        <end position="340"/>
    </location>
</feature>
<feature type="transmembrane region" description="Helical" evidence="1">
    <location>
        <begin position="341"/>
        <end position="361"/>
    </location>
</feature>
<feature type="topological domain" description="Extracellular" evidence="1">
    <location>
        <begin position="362"/>
        <end position="418"/>
    </location>
</feature>
<feature type="transmembrane region" description="Helical" evidence="1">
    <location>
        <begin position="419"/>
        <end position="439"/>
    </location>
</feature>
<feature type="topological domain" description="Cytoplasmic" evidence="1">
    <location>
        <begin position="440"/>
        <end position="455"/>
    </location>
</feature>
<feature type="transmembrane region" description="Helical" evidence="1">
    <location>
        <begin position="456"/>
        <end position="476"/>
    </location>
</feature>
<feature type="topological domain" description="Extracellular" evidence="1">
    <location>
        <begin position="477"/>
        <end position="490"/>
    </location>
</feature>
<feature type="transmembrane region" description="Helical" evidence="1">
    <location>
        <begin position="491"/>
        <end position="511"/>
    </location>
</feature>
<feature type="topological domain" description="Cytoplasmic" evidence="1">
    <location>
        <begin position="512"/>
        <end position="574"/>
    </location>
</feature>
<feature type="modified residue" description="Phosphothreonine" evidence="3 4">
    <location>
        <position position="552"/>
    </location>
</feature>
<feature type="modified residue" description="Phosphoserine" evidence="4">
    <location>
        <position position="573"/>
    </location>
</feature>
<feature type="cross-link" description="Glycyl lysine isopeptide (Lys-Gly) (interchain with G-Cter in ubiquitin)" evidence="5">
    <location>
        <position position="28"/>
    </location>
</feature>
<sequence>MSEGRTFLSQLNVFNKENYQFSSSTTKKEVSNSTVDADNGASDFEAGQQFATELDQGEKQLGILSCIGLICNRMLGTGVFAVSSTIYTLCGSVGLALIMWAVGAIIAISGLYVYMEFGTAIPKNGGEKNYLEAIFRKPKFFITCMYAAYIFFLGWAAGNSINTAIMFLTAADTEVTKWNQRGIGVAVVFFAFLINSLNVKIGLYLQNILGIFKIGIVLFISITGWVALGGGLKDGYQSHNFRNAFEGTETATAYGIVNALYSVIWSFVGYSNVNYALGEVKNPVRTLKIAGPTSMVFLAIIYIFVNIAYFAVVPKDKLISSKLILAADFFDIVFGGQAKRAAAALVGLSALGNVLSVIFSQGRIIQQLGREGVLPFSNFFASSKPFNSPMVGLFQHFIVCTVTILAPPPGDAYLLVQNLISYPMNIINFAISAGLLWIYWQRRQGKIEWNPPIKAGVFVTGFFTLSNLYLIIAPYVPPSNGESVYSSMPYWIHCVIAWGIFFFGGVYYVVWAQLLPRWGHYKLVSKDVLGEDGFWRVKIAKVYDDTIGDVDTQEDGVIETNIIEHYKSEQEKSL</sequence>
<protein>
    <recommendedName>
        <fullName>High-affinity methionine permease</fullName>
    </recommendedName>
</protein>
<evidence type="ECO:0000255" key="1"/>
<evidence type="ECO:0000305" key="2"/>
<evidence type="ECO:0007744" key="3">
    <source>
    </source>
</evidence>
<evidence type="ECO:0007744" key="4">
    <source>
    </source>
</evidence>
<evidence type="ECO:0007744" key="5">
    <source>
    </source>
</evidence>
<reference key="1">
    <citation type="journal article" date="1996" name="J. Mol. Biol.">
        <title>The study of methionine uptake in Saccharomyces cerevisiae reveals a new family of amino acid permeases.</title>
        <authorList>
            <person name="Isnard A.D."/>
            <person name="Thomas D."/>
            <person name="Surdin-Kerjan Y."/>
        </authorList>
    </citation>
    <scope>NUCLEOTIDE SEQUENCE [GENOMIC DNA]</scope>
    <source>
        <strain>ATCC 26786 / X2180-1A</strain>
    </source>
</reference>
<reference key="2">
    <citation type="journal article" date="2005" name="Nat. Genet.">
        <title>Quantitative trait loci mapped to single-nucleotide resolution in yeast.</title>
        <authorList>
            <person name="Deutschbauer A.M."/>
            <person name="Davis R.W."/>
        </authorList>
    </citation>
    <scope>NUCLEOTIDE SEQUENCE [GENOMIC DNA]</scope>
    <source>
        <strain>SK1</strain>
    </source>
</reference>
<reference key="3">
    <citation type="journal article" date="1997" name="Nature">
        <title>The nucleotide sequence of Saccharomyces cerevisiae chromosome VII.</title>
        <authorList>
            <person name="Tettelin H."/>
            <person name="Agostoni-Carbone M.L."/>
            <person name="Albermann K."/>
            <person name="Albers M."/>
            <person name="Arroyo J."/>
            <person name="Backes U."/>
            <person name="Barreiros T."/>
            <person name="Bertani I."/>
            <person name="Bjourson A.J."/>
            <person name="Brueckner M."/>
            <person name="Bruschi C.V."/>
            <person name="Carignani G."/>
            <person name="Castagnoli L."/>
            <person name="Cerdan E."/>
            <person name="Clemente M.L."/>
            <person name="Coblenz A."/>
            <person name="Coglievina M."/>
            <person name="Coissac E."/>
            <person name="Defoor E."/>
            <person name="Del Bino S."/>
            <person name="Delius H."/>
            <person name="Delneri D."/>
            <person name="de Wergifosse P."/>
            <person name="Dujon B."/>
            <person name="Durand P."/>
            <person name="Entian K.-D."/>
            <person name="Eraso P."/>
            <person name="Escribano V."/>
            <person name="Fabiani L."/>
            <person name="Fartmann B."/>
            <person name="Feroli F."/>
            <person name="Feuermann M."/>
            <person name="Frontali L."/>
            <person name="Garcia-Gonzalez M."/>
            <person name="Garcia-Saez M.I."/>
            <person name="Goffeau A."/>
            <person name="Guerreiro P."/>
            <person name="Hani J."/>
            <person name="Hansen M."/>
            <person name="Hebling U."/>
            <person name="Hernandez K."/>
            <person name="Heumann K."/>
            <person name="Hilger F."/>
            <person name="Hofmann B."/>
            <person name="Indge K.J."/>
            <person name="James C.M."/>
            <person name="Klima R."/>
            <person name="Koetter P."/>
            <person name="Kramer B."/>
            <person name="Kramer W."/>
            <person name="Lauquin G."/>
            <person name="Leuther H."/>
            <person name="Louis E.J."/>
            <person name="Maillier E."/>
            <person name="Marconi A."/>
            <person name="Martegani E."/>
            <person name="Mazon M.J."/>
            <person name="Mazzoni C."/>
            <person name="McReynolds A.D.K."/>
            <person name="Melchioretto P."/>
            <person name="Mewes H.-W."/>
            <person name="Minenkova O."/>
            <person name="Mueller-Auer S."/>
            <person name="Nawrocki A."/>
            <person name="Netter P."/>
            <person name="Neu R."/>
            <person name="Nombela C."/>
            <person name="Oliver S.G."/>
            <person name="Panzeri L."/>
            <person name="Paoluzi S."/>
            <person name="Plevani P."/>
            <person name="Portetelle D."/>
            <person name="Portillo F."/>
            <person name="Potier S."/>
            <person name="Purnelle B."/>
            <person name="Rieger M."/>
            <person name="Riles L."/>
            <person name="Rinaldi T."/>
            <person name="Robben J."/>
            <person name="Rodrigues-Pousada C."/>
            <person name="Rodriguez-Belmonte E."/>
            <person name="Rodriguez-Torres A.M."/>
            <person name="Rose M."/>
            <person name="Ruzzi M."/>
            <person name="Saliola M."/>
            <person name="Sanchez-Perez M."/>
            <person name="Schaefer B."/>
            <person name="Schaefer M."/>
            <person name="Scharfe M."/>
            <person name="Schmidheini T."/>
            <person name="Schreer A."/>
            <person name="Skala J."/>
            <person name="Souciet J.-L."/>
            <person name="Steensma H.Y."/>
            <person name="Talla E."/>
            <person name="Thierry A."/>
            <person name="Vandenbol M."/>
            <person name="van der Aart Q.J.M."/>
            <person name="Van Dyck L."/>
            <person name="Vanoni M."/>
            <person name="Verhasselt P."/>
            <person name="Voet M."/>
            <person name="Volckaert G."/>
            <person name="Wambutt R."/>
            <person name="Watson M.D."/>
            <person name="Weber N."/>
            <person name="Wedler E."/>
            <person name="Wedler H."/>
            <person name="Wipfli P."/>
            <person name="Wolf K."/>
            <person name="Wright L.F."/>
            <person name="Zaccaria P."/>
            <person name="Zimmermann M."/>
            <person name="Zollner A."/>
            <person name="Kleine K."/>
        </authorList>
    </citation>
    <scope>NUCLEOTIDE SEQUENCE [LARGE SCALE GENOMIC DNA]</scope>
    <source>
        <strain>ATCC 204508 / S288c</strain>
    </source>
</reference>
<reference key="4">
    <citation type="journal article" date="2014" name="G3 (Bethesda)">
        <title>The reference genome sequence of Saccharomyces cerevisiae: Then and now.</title>
        <authorList>
            <person name="Engel S.R."/>
            <person name="Dietrich F.S."/>
            <person name="Fisk D.G."/>
            <person name="Binkley G."/>
            <person name="Balakrishnan R."/>
            <person name="Costanzo M.C."/>
            <person name="Dwight S.S."/>
            <person name="Hitz B.C."/>
            <person name="Karra K."/>
            <person name="Nash R.S."/>
            <person name="Weng S."/>
            <person name="Wong E.D."/>
            <person name="Lloyd P."/>
            <person name="Skrzypek M.S."/>
            <person name="Miyasato S.R."/>
            <person name="Simison M."/>
            <person name="Cherry J.M."/>
        </authorList>
    </citation>
    <scope>GENOME REANNOTATION</scope>
    <source>
        <strain>ATCC 204508 / S288c</strain>
    </source>
</reference>
<reference key="5">
    <citation type="journal article" date="2006" name="Proc. Natl. Acad. Sci. U.S.A.">
        <title>A global topology map of the Saccharomyces cerevisiae membrane proteome.</title>
        <authorList>
            <person name="Kim H."/>
            <person name="Melen K."/>
            <person name="Oesterberg M."/>
            <person name="von Heijne G."/>
        </authorList>
    </citation>
    <scope>TOPOLOGY [LARGE SCALE ANALYSIS]</scope>
    <source>
        <strain>ATCC 208353 / W303-1A</strain>
    </source>
</reference>
<reference key="6">
    <citation type="journal article" date="2007" name="J. Proteome Res.">
        <title>Large-scale phosphorylation analysis of alpha-factor-arrested Saccharomyces cerevisiae.</title>
        <authorList>
            <person name="Li X."/>
            <person name="Gerber S.A."/>
            <person name="Rudner A.D."/>
            <person name="Beausoleil S.A."/>
            <person name="Haas W."/>
            <person name="Villen J."/>
            <person name="Elias J.E."/>
            <person name="Gygi S.P."/>
        </authorList>
    </citation>
    <scope>IDENTIFICATION BY MASS SPECTROMETRY [LARGE SCALE ANALYSIS]</scope>
    <source>
        <strain>ADR376</strain>
    </source>
</reference>
<reference key="7">
    <citation type="journal article" date="2008" name="Mol. Cell. Proteomics">
        <title>A multidimensional chromatography technology for in-depth phosphoproteome analysis.</title>
        <authorList>
            <person name="Albuquerque C.P."/>
            <person name="Smolka M.B."/>
            <person name="Payne S.H."/>
            <person name="Bafna V."/>
            <person name="Eng J."/>
            <person name="Zhou H."/>
        </authorList>
    </citation>
    <scope>PHOSPHORYLATION [LARGE SCALE ANALYSIS] AT THR-552</scope>
    <scope>IDENTIFICATION BY MASS SPECTROMETRY [LARGE SCALE ANALYSIS]</scope>
</reference>
<reference key="8">
    <citation type="journal article" date="2009" name="Science">
        <title>Global analysis of Cdk1 substrate phosphorylation sites provides insights into evolution.</title>
        <authorList>
            <person name="Holt L.J."/>
            <person name="Tuch B.B."/>
            <person name="Villen J."/>
            <person name="Johnson A.D."/>
            <person name="Gygi S.P."/>
            <person name="Morgan D.O."/>
        </authorList>
    </citation>
    <scope>PHOSPHORYLATION [LARGE SCALE ANALYSIS] AT THR-552 AND SER-573</scope>
    <scope>IDENTIFICATION BY MASS SPECTROMETRY [LARGE SCALE ANALYSIS]</scope>
</reference>
<reference key="9">
    <citation type="journal article" date="2012" name="Proteomics">
        <title>Sites of ubiquitin attachment in Saccharomyces cerevisiae.</title>
        <authorList>
            <person name="Starita L.M."/>
            <person name="Lo R.S."/>
            <person name="Eng J.K."/>
            <person name="von Haller P.D."/>
            <person name="Fields S."/>
        </authorList>
    </citation>
    <scope>UBIQUITINATION [LARGE SCALE ANALYSIS] AT LYS-28</scope>
    <scope>IDENTIFICATION BY MASS SPECTROMETRY [LARGE SCALE ANALYSIS]</scope>
</reference>
<proteinExistence type="evidence at protein level"/>
<keyword id="KW-0029">Amino-acid transport</keyword>
<keyword id="KW-1017">Isopeptide bond</keyword>
<keyword id="KW-0472">Membrane</keyword>
<keyword id="KW-0597">Phosphoprotein</keyword>
<keyword id="KW-1185">Reference proteome</keyword>
<keyword id="KW-0812">Transmembrane</keyword>
<keyword id="KW-1133">Transmembrane helix</keyword>
<keyword id="KW-0813">Transport</keyword>
<keyword id="KW-0832">Ubl conjugation</keyword>
<organism>
    <name type="scientific">Saccharomyces cerevisiae (strain ATCC 204508 / S288c)</name>
    <name type="common">Baker's yeast</name>
    <dbReference type="NCBI Taxonomy" id="559292"/>
    <lineage>
        <taxon>Eukaryota</taxon>
        <taxon>Fungi</taxon>
        <taxon>Dikarya</taxon>
        <taxon>Ascomycota</taxon>
        <taxon>Saccharomycotina</taxon>
        <taxon>Saccharomycetes</taxon>
        <taxon>Saccharomycetales</taxon>
        <taxon>Saccharomycetaceae</taxon>
        <taxon>Saccharomyces</taxon>
    </lineage>
</organism>
<comment type="function">
    <text>High affinity permease for methionine.</text>
</comment>
<comment type="subcellular location">
    <subcellularLocation>
        <location evidence="2">Membrane</location>
        <topology evidence="2">Multi-pass membrane protein</topology>
    </subcellularLocation>
</comment>
<comment type="similarity">
    <text evidence="2">To yeast low affinity methionine permease (MUP3).</text>
</comment>
<gene>
    <name type="primary">MUP1</name>
    <name type="ordered locus">YGR055W</name>
</gene>
<accession>P50276</accession>
<accession>D6VUJ0</accession>
<accession>Q45U31</accession>
<name>MUP1_YEAST</name>